<feature type="chain" id="PRO_0000144483" description="ATP synthase subunit beta">
    <location>
        <begin position="1"/>
        <end position="483"/>
    </location>
</feature>
<feature type="binding site" evidence="1">
    <location>
        <begin position="162"/>
        <end position="169"/>
    </location>
    <ligand>
        <name>ATP</name>
        <dbReference type="ChEBI" id="CHEBI:30616"/>
    </ligand>
</feature>
<keyword id="KW-0066">ATP synthesis</keyword>
<keyword id="KW-0067">ATP-binding</keyword>
<keyword id="KW-0139">CF(1)</keyword>
<keyword id="KW-0375">Hydrogen ion transport</keyword>
<keyword id="KW-0406">Ion transport</keyword>
<keyword id="KW-0472">Membrane</keyword>
<keyword id="KW-0547">Nucleotide-binding</keyword>
<keyword id="KW-1185">Reference proteome</keyword>
<keyword id="KW-0793">Thylakoid</keyword>
<keyword id="KW-1278">Translocase</keyword>
<keyword id="KW-0813">Transport</keyword>
<proteinExistence type="inferred from homology"/>
<comment type="function">
    <text evidence="1">Produces ATP from ADP in the presence of a proton gradient across the membrane. The catalytic sites are hosted primarily by the beta subunits.</text>
</comment>
<comment type="catalytic activity">
    <reaction evidence="1">
        <text>ATP + H2O + 4 H(+)(in) = ADP + phosphate + 5 H(+)(out)</text>
        <dbReference type="Rhea" id="RHEA:57720"/>
        <dbReference type="ChEBI" id="CHEBI:15377"/>
        <dbReference type="ChEBI" id="CHEBI:15378"/>
        <dbReference type="ChEBI" id="CHEBI:30616"/>
        <dbReference type="ChEBI" id="CHEBI:43474"/>
        <dbReference type="ChEBI" id="CHEBI:456216"/>
        <dbReference type="EC" id="7.1.2.2"/>
    </reaction>
</comment>
<comment type="subunit">
    <text evidence="1">F-type ATPases have 2 components, CF(1) - the catalytic core - and CF(0) - the membrane proton channel. CF(1) has five subunits: alpha(3), beta(3), gamma(1), delta(1), epsilon(1). CF(0) has four main subunits: a(1), b(1), b'(1) and c(9-12).</text>
</comment>
<comment type="subcellular location">
    <subcellularLocation>
        <location evidence="1">Cellular thylakoid membrane</location>
        <topology evidence="1">Peripheral membrane protein</topology>
    </subcellularLocation>
</comment>
<comment type="similarity">
    <text evidence="1">Belongs to the ATPase alpha/beta chains family.</text>
</comment>
<dbReference type="EC" id="7.1.2.2" evidence="1"/>
<dbReference type="EMBL" id="X58129">
    <property type="protein sequence ID" value="CAA41137.1"/>
    <property type="molecule type" value="Genomic_DNA"/>
</dbReference>
<dbReference type="EMBL" id="BA000022">
    <property type="protein sequence ID" value="BAA18087.1"/>
    <property type="molecule type" value="Genomic_DNA"/>
</dbReference>
<dbReference type="PIR" id="S17753">
    <property type="entry name" value="PWYBB"/>
</dbReference>
<dbReference type="SMR" id="P26527"/>
<dbReference type="FunCoup" id="P26527">
    <property type="interactions" value="341"/>
</dbReference>
<dbReference type="IntAct" id="P26527">
    <property type="interactions" value="7"/>
</dbReference>
<dbReference type="STRING" id="1148.gene:10498958"/>
<dbReference type="PaxDb" id="1148-1653171"/>
<dbReference type="EnsemblBacteria" id="BAA18087">
    <property type="protein sequence ID" value="BAA18087"/>
    <property type="gene ID" value="BAA18087"/>
</dbReference>
<dbReference type="KEGG" id="syn:slr1329"/>
<dbReference type="eggNOG" id="COG0055">
    <property type="taxonomic scope" value="Bacteria"/>
</dbReference>
<dbReference type="InParanoid" id="P26527"/>
<dbReference type="PhylomeDB" id="P26527"/>
<dbReference type="Proteomes" id="UP000001425">
    <property type="component" value="Chromosome"/>
</dbReference>
<dbReference type="GO" id="GO:0005886">
    <property type="term" value="C:plasma membrane"/>
    <property type="evidence" value="ECO:0000314"/>
    <property type="project" value="UniProtKB"/>
</dbReference>
<dbReference type="GO" id="GO:0031676">
    <property type="term" value="C:plasma membrane-derived thylakoid membrane"/>
    <property type="evidence" value="ECO:0007669"/>
    <property type="project" value="UniProtKB-SubCell"/>
</dbReference>
<dbReference type="GO" id="GO:0045259">
    <property type="term" value="C:proton-transporting ATP synthase complex"/>
    <property type="evidence" value="ECO:0000314"/>
    <property type="project" value="UniProtKB"/>
</dbReference>
<dbReference type="GO" id="GO:0005524">
    <property type="term" value="F:ATP binding"/>
    <property type="evidence" value="ECO:0007669"/>
    <property type="project" value="UniProtKB-UniRule"/>
</dbReference>
<dbReference type="GO" id="GO:0016887">
    <property type="term" value="F:ATP hydrolysis activity"/>
    <property type="evidence" value="ECO:0007669"/>
    <property type="project" value="InterPro"/>
</dbReference>
<dbReference type="GO" id="GO:0046933">
    <property type="term" value="F:proton-transporting ATP synthase activity, rotational mechanism"/>
    <property type="evidence" value="ECO:0007669"/>
    <property type="project" value="UniProtKB-UniRule"/>
</dbReference>
<dbReference type="CDD" id="cd18110">
    <property type="entry name" value="ATP-synt_F1_beta_C"/>
    <property type="match status" value="1"/>
</dbReference>
<dbReference type="CDD" id="cd18115">
    <property type="entry name" value="ATP-synt_F1_beta_N"/>
    <property type="match status" value="1"/>
</dbReference>
<dbReference type="CDD" id="cd01133">
    <property type="entry name" value="F1-ATPase_beta_CD"/>
    <property type="match status" value="1"/>
</dbReference>
<dbReference type="FunFam" id="1.10.1140.10:FF:000001">
    <property type="entry name" value="ATP synthase subunit beta"/>
    <property type="match status" value="1"/>
</dbReference>
<dbReference type="FunFam" id="3.40.50.12240:FF:000006">
    <property type="entry name" value="ATP synthase subunit beta"/>
    <property type="match status" value="1"/>
</dbReference>
<dbReference type="FunFam" id="3.40.50.300:FF:000004">
    <property type="entry name" value="ATP synthase subunit beta"/>
    <property type="match status" value="1"/>
</dbReference>
<dbReference type="FunFam" id="2.40.10.170:FF:000002">
    <property type="entry name" value="ATP synthase subunit beta, chloroplastic"/>
    <property type="match status" value="1"/>
</dbReference>
<dbReference type="Gene3D" id="2.40.10.170">
    <property type="match status" value="1"/>
</dbReference>
<dbReference type="Gene3D" id="1.10.1140.10">
    <property type="entry name" value="Bovine Mitochondrial F1-atpase, Atp Synthase Beta Chain, Chain D, domain 3"/>
    <property type="match status" value="1"/>
</dbReference>
<dbReference type="Gene3D" id="3.40.50.300">
    <property type="entry name" value="P-loop containing nucleotide triphosphate hydrolases"/>
    <property type="match status" value="1"/>
</dbReference>
<dbReference type="HAMAP" id="MF_01347">
    <property type="entry name" value="ATP_synth_beta_bact"/>
    <property type="match status" value="1"/>
</dbReference>
<dbReference type="InterPro" id="IPR003593">
    <property type="entry name" value="AAA+_ATPase"/>
</dbReference>
<dbReference type="InterPro" id="IPR055190">
    <property type="entry name" value="ATP-synt_VA_C"/>
</dbReference>
<dbReference type="InterPro" id="IPR005722">
    <property type="entry name" value="ATP_synth_F1_bsu"/>
</dbReference>
<dbReference type="InterPro" id="IPR020003">
    <property type="entry name" value="ATPase_a/bsu_AS"/>
</dbReference>
<dbReference type="InterPro" id="IPR050053">
    <property type="entry name" value="ATPase_alpha/beta_chains"/>
</dbReference>
<dbReference type="InterPro" id="IPR004100">
    <property type="entry name" value="ATPase_F1/V1/A1_a/bsu_N"/>
</dbReference>
<dbReference type="InterPro" id="IPR036121">
    <property type="entry name" value="ATPase_F1/V1/A1_a/bsu_N_sf"/>
</dbReference>
<dbReference type="InterPro" id="IPR000194">
    <property type="entry name" value="ATPase_F1/V1/A1_a/bsu_nucl-bd"/>
</dbReference>
<dbReference type="InterPro" id="IPR024034">
    <property type="entry name" value="ATPase_F1/V1_b/a_C"/>
</dbReference>
<dbReference type="InterPro" id="IPR027417">
    <property type="entry name" value="P-loop_NTPase"/>
</dbReference>
<dbReference type="NCBIfam" id="TIGR01039">
    <property type="entry name" value="atpD"/>
    <property type="match status" value="1"/>
</dbReference>
<dbReference type="PANTHER" id="PTHR15184">
    <property type="entry name" value="ATP SYNTHASE"/>
    <property type="match status" value="1"/>
</dbReference>
<dbReference type="PANTHER" id="PTHR15184:SF71">
    <property type="entry name" value="ATP SYNTHASE SUBUNIT BETA, MITOCHONDRIAL"/>
    <property type="match status" value="1"/>
</dbReference>
<dbReference type="Pfam" id="PF00006">
    <property type="entry name" value="ATP-synt_ab"/>
    <property type="match status" value="1"/>
</dbReference>
<dbReference type="Pfam" id="PF02874">
    <property type="entry name" value="ATP-synt_ab_N"/>
    <property type="match status" value="1"/>
</dbReference>
<dbReference type="Pfam" id="PF22919">
    <property type="entry name" value="ATP-synt_VA_C"/>
    <property type="match status" value="1"/>
</dbReference>
<dbReference type="SMART" id="SM00382">
    <property type="entry name" value="AAA"/>
    <property type="match status" value="1"/>
</dbReference>
<dbReference type="SUPFAM" id="SSF47917">
    <property type="entry name" value="C-terminal domain of alpha and beta subunits of F1 ATP synthase"/>
    <property type="match status" value="1"/>
</dbReference>
<dbReference type="SUPFAM" id="SSF50615">
    <property type="entry name" value="N-terminal domain of alpha and beta subunits of F1 ATP synthase"/>
    <property type="match status" value="1"/>
</dbReference>
<dbReference type="SUPFAM" id="SSF52540">
    <property type="entry name" value="P-loop containing nucleoside triphosphate hydrolases"/>
    <property type="match status" value="1"/>
</dbReference>
<dbReference type="PROSITE" id="PS00152">
    <property type="entry name" value="ATPASE_ALPHA_BETA"/>
    <property type="match status" value="1"/>
</dbReference>
<organism>
    <name type="scientific">Synechocystis sp. (strain ATCC 27184 / PCC 6803 / Kazusa)</name>
    <dbReference type="NCBI Taxonomy" id="1111708"/>
    <lineage>
        <taxon>Bacteria</taxon>
        <taxon>Bacillati</taxon>
        <taxon>Cyanobacteriota</taxon>
        <taxon>Cyanophyceae</taxon>
        <taxon>Synechococcales</taxon>
        <taxon>Merismopediaceae</taxon>
        <taxon>Synechocystis</taxon>
    </lineage>
</organism>
<reference key="1">
    <citation type="journal article" date="1991" name="Plant Mol. Biol.">
        <title>The atp1 and atp2 operons of the cyanobacterium Synechocystis sp. PCC 6803.</title>
        <authorList>
            <person name="Lill H."/>
            <person name="Nelson N."/>
        </authorList>
    </citation>
    <scope>NUCLEOTIDE SEQUENCE [GENOMIC DNA]</scope>
</reference>
<reference key="2">
    <citation type="journal article" date="1996" name="DNA Res.">
        <title>Sequence analysis of the genome of the unicellular cyanobacterium Synechocystis sp. strain PCC6803. II. Sequence determination of the entire genome and assignment of potential protein-coding regions.</title>
        <authorList>
            <person name="Kaneko T."/>
            <person name="Sato S."/>
            <person name="Kotani H."/>
            <person name="Tanaka A."/>
            <person name="Asamizu E."/>
            <person name="Nakamura Y."/>
            <person name="Miyajima N."/>
            <person name="Hirosawa M."/>
            <person name="Sugiura M."/>
            <person name="Sasamoto S."/>
            <person name="Kimura T."/>
            <person name="Hosouchi T."/>
            <person name="Matsuno A."/>
            <person name="Muraki A."/>
            <person name="Nakazaki N."/>
            <person name="Naruo K."/>
            <person name="Okumura S."/>
            <person name="Shimpo S."/>
            <person name="Takeuchi C."/>
            <person name="Wada T."/>
            <person name="Watanabe A."/>
            <person name="Yamada M."/>
            <person name="Yasuda M."/>
            <person name="Tabata S."/>
        </authorList>
    </citation>
    <scope>NUCLEOTIDE SEQUENCE [LARGE SCALE GENOMIC DNA]</scope>
    <source>
        <strain>ATCC 27184 / PCC 6803 / Kazusa</strain>
    </source>
</reference>
<accession>P26527</accession>
<name>ATPB_SYNY3</name>
<sequence>MVAVKEATNVGKITQVIGPVIDAQFPSGKLPRIYNALKVQGRNSAGNEVAVTCEVQQLLGDNQVRAVAMSSTDGLVRGMDVVDTGAPISVPVGTGTLGRIFNVLGEPVDNKGPVPAGETFPIHRPAPKLVDLETKPQVFETGIKVIDLLTPYRQGGKIGLFGGAGVGKTVIMMELINNIAIQHGGVSVFGGVGERTREGNDLYNEMIESNVINADKPEESKIALVYGQMNEPPGARMRVGLTALTMAEYFRDVNKQDVLLFIDNIFRFVQAGSEVSALLGRMPSAVGYQPTLGTDVGDLQERITSTKEGSITSIQAVYVPADDLTDPAPATTFAHLDGTTVLSRGLAAKGIYPAVDPLDSTSTMLQPSIVGSEHYDTAREVQSTLQRYKELQDIIAILGLDELSEEDRLTVDRARKIERFLSQPFFVAEVFTGAPGKYVSLADTIKGFKAILAGELDDLPEQAFYLVGDIEEAKAKGAKLKEG</sequence>
<protein>
    <recommendedName>
        <fullName evidence="1">ATP synthase subunit beta</fullName>
        <ecNumber evidence="1">7.1.2.2</ecNumber>
    </recommendedName>
    <alternativeName>
        <fullName evidence="1">ATP synthase F1 sector subunit beta</fullName>
    </alternativeName>
    <alternativeName>
        <fullName evidence="1">F-ATPase subunit beta</fullName>
    </alternativeName>
</protein>
<evidence type="ECO:0000255" key="1">
    <source>
        <dbReference type="HAMAP-Rule" id="MF_01347"/>
    </source>
</evidence>
<gene>
    <name evidence="1" type="primary">atpD</name>
    <name evidence="1" type="synonym">atpB</name>
    <name type="ordered locus">slr1329</name>
</gene>